<dbReference type="EC" id="5.4.99.12" evidence="1"/>
<dbReference type="EMBL" id="CP000891">
    <property type="protein sequence ID" value="ABX50002.1"/>
    <property type="molecule type" value="Genomic_DNA"/>
</dbReference>
<dbReference type="RefSeq" id="WP_006085461.1">
    <property type="nucleotide sequence ID" value="NC_009997.1"/>
</dbReference>
<dbReference type="SMR" id="A9KTU7"/>
<dbReference type="GeneID" id="11772923"/>
<dbReference type="KEGG" id="sbn:Sbal195_2836"/>
<dbReference type="HOGENOM" id="CLU_014673_0_2_6"/>
<dbReference type="Proteomes" id="UP000000770">
    <property type="component" value="Chromosome"/>
</dbReference>
<dbReference type="GO" id="GO:0003723">
    <property type="term" value="F:RNA binding"/>
    <property type="evidence" value="ECO:0007669"/>
    <property type="project" value="InterPro"/>
</dbReference>
<dbReference type="GO" id="GO:0160147">
    <property type="term" value="F:tRNA pseudouridine(38-40) synthase activity"/>
    <property type="evidence" value="ECO:0007669"/>
    <property type="project" value="UniProtKB-EC"/>
</dbReference>
<dbReference type="GO" id="GO:0031119">
    <property type="term" value="P:tRNA pseudouridine synthesis"/>
    <property type="evidence" value="ECO:0007669"/>
    <property type="project" value="UniProtKB-UniRule"/>
</dbReference>
<dbReference type="CDD" id="cd02570">
    <property type="entry name" value="PseudoU_synth_EcTruA"/>
    <property type="match status" value="1"/>
</dbReference>
<dbReference type="FunFam" id="3.30.70.580:FF:000001">
    <property type="entry name" value="tRNA pseudouridine synthase A"/>
    <property type="match status" value="1"/>
</dbReference>
<dbReference type="FunFam" id="3.30.70.660:FF:000001">
    <property type="entry name" value="tRNA pseudouridine synthase A"/>
    <property type="match status" value="1"/>
</dbReference>
<dbReference type="Gene3D" id="3.30.70.660">
    <property type="entry name" value="Pseudouridine synthase I, catalytic domain, C-terminal subdomain"/>
    <property type="match status" value="1"/>
</dbReference>
<dbReference type="Gene3D" id="3.30.70.580">
    <property type="entry name" value="Pseudouridine synthase I, catalytic domain, N-terminal subdomain"/>
    <property type="match status" value="1"/>
</dbReference>
<dbReference type="HAMAP" id="MF_00171">
    <property type="entry name" value="TruA"/>
    <property type="match status" value="1"/>
</dbReference>
<dbReference type="InterPro" id="IPR020103">
    <property type="entry name" value="PsdUridine_synth_cat_dom_sf"/>
</dbReference>
<dbReference type="InterPro" id="IPR001406">
    <property type="entry name" value="PsdUridine_synth_TruA"/>
</dbReference>
<dbReference type="InterPro" id="IPR020097">
    <property type="entry name" value="PsdUridine_synth_TruA_a/b_dom"/>
</dbReference>
<dbReference type="InterPro" id="IPR020095">
    <property type="entry name" value="PsdUridine_synth_TruA_C"/>
</dbReference>
<dbReference type="InterPro" id="IPR020094">
    <property type="entry name" value="TruA/RsuA/RluB/E/F_N"/>
</dbReference>
<dbReference type="NCBIfam" id="TIGR00071">
    <property type="entry name" value="hisT_truA"/>
    <property type="match status" value="1"/>
</dbReference>
<dbReference type="PANTHER" id="PTHR11142">
    <property type="entry name" value="PSEUDOURIDYLATE SYNTHASE"/>
    <property type="match status" value="1"/>
</dbReference>
<dbReference type="PANTHER" id="PTHR11142:SF0">
    <property type="entry name" value="TRNA PSEUDOURIDINE SYNTHASE-LIKE 1"/>
    <property type="match status" value="1"/>
</dbReference>
<dbReference type="Pfam" id="PF01416">
    <property type="entry name" value="PseudoU_synth_1"/>
    <property type="match status" value="2"/>
</dbReference>
<dbReference type="PIRSF" id="PIRSF001430">
    <property type="entry name" value="tRNA_psdUrid_synth"/>
    <property type="match status" value="1"/>
</dbReference>
<dbReference type="SUPFAM" id="SSF55120">
    <property type="entry name" value="Pseudouridine synthase"/>
    <property type="match status" value="1"/>
</dbReference>
<protein>
    <recommendedName>
        <fullName evidence="1">tRNA pseudouridine synthase A</fullName>
        <ecNumber evidence="1">5.4.99.12</ecNumber>
    </recommendedName>
    <alternativeName>
        <fullName evidence="1">tRNA pseudouridine(38-40) synthase</fullName>
    </alternativeName>
    <alternativeName>
        <fullName evidence="1">tRNA pseudouridylate synthase I</fullName>
    </alternativeName>
    <alternativeName>
        <fullName evidence="1">tRNA-uridine isomerase I</fullName>
    </alternativeName>
</protein>
<reference key="1">
    <citation type="submission" date="2007-11" db="EMBL/GenBank/DDBJ databases">
        <title>Complete sequence of chromosome of Shewanella baltica OS195.</title>
        <authorList>
            <consortium name="US DOE Joint Genome Institute"/>
            <person name="Copeland A."/>
            <person name="Lucas S."/>
            <person name="Lapidus A."/>
            <person name="Barry K."/>
            <person name="Glavina del Rio T."/>
            <person name="Dalin E."/>
            <person name="Tice H."/>
            <person name="Pitluck S."/>
            <person name="Chain P."/>
            <person name="Malfatti S."/>
            <person name="Shin M."/>
            <person name="Vergez L."/>
            <person name="Schmutz J."/>
            <person name="Larimer F."/>
            <person name="Land M."/>
            <person name="Hauser L."/>
            <person name="Kyrpides N."/>
            <person name="Kim E."/>
            <person name="Brettar I."/>
            <person name="Rodrigues J."/>
            <person name="Konstantinidis K."/>
            <person name="Klappenbach J."/>
            <person name="Hofle M."/>
            <person name="Tiedje J."/>
            <person name="Richardson P."/>
        </authorList>
    </citation>
    <scope>NUCLEOTIDE SEQUENCE [LARGE SCALE GENOMIC DNA]</scope>
    <source>
        <strain>OS195</strain>
    </source>
</reference>
<name>TRUA_SHEB9</name>
<sequence>MRIALGIEYDGNGYFGWQRQAEVDSVQAQLERALSIVANEPIGVFCAGRTDAGVHATGQVVHFETNAIRNEGAWTLGVNANLPDNIAVRWVKEVDDSFHARFSATARRYRYVIYNHSFRPGILRHGVSHYHGDIDADRMHQAAQALLGEQDFTSFRAVQCQSKTPFRNVHCVNVTRQGMYVIVDIAANAFLHHMVRNIVGSLLEIGLGNQPLTWMGDLLALKDRNQAAATAKPHGLYLVDVTYPEQYQLPKLALGPLFMLD</sequence>
<proteinExistence type="inferred from homology"/>
<gene>
    <name evidence="1" type="primary">truA</name>
    <name type="ordered locus">Sbal195_2836</name>
</gene>
<keyword id="KW-0413">Isomerase</keyword>
<keyword id="KW-0819">tRNA processing</keyword>
<feature type="chain" id="PRO_1000077101" description="tRNA pseudouridine synthase A">
    <location>
        <begin position="1"/>
        <end position="261"/>
    </location>
</feature>
<feature type="active site" description="Nucleophile" evidence="1">
    <location>
        <position position="51"/>
    </location>
</feature>
<feature type="binding site" evidence="1">
    <location>
        <position position="109"/>
    </location>
    <ligand>
        <name>substrate</name>
    </ligand>
</feature>
<accession>A9KTU7</accession>
<organism>
    <name type="scientific">Shewanella baltica (strain OS195)</name>
    <dbReference type="NCBI Taxonomy" id="399599"/>
    <lineage>
        <taxon>Bacteria</taxon>
        <taxon>Pseudomonadati</taxon>
        <taxon>Pseudomonadota</taxon>
        <taxon>Gammaproteobacteria</taxon>
        <taxon>Alteromonadales</taxon>
        <taxon>Shewanellaceae</taxon>
        <taxon>Shewanella</taxon>
    </lineage>
</organism>
<evidence type="ECO:0000255" key="1">
    <source>
        <dbReference type="HAMAP-Rule" id="MF_00171"/>
    </source>
</evidence>
<comment type="function">
    <text evidence="1">Formation of pseudouridine at positions 38, 39 and 40 in the anticodon stem and loop of transfer RNAs.</text>
</comment>
<comment type="catalytic activity">
    <reaction evidence="1">
        <text>uridine(38/39/40) in tRNA = pseudouridine(38/39/40) in tRNA</text>
        <dbReference type="Rhea" id="RHEA:22376"/>
        <dbReference type="Rhea" id="RHEA-COMP:10085"/>
        <dbReference type="Rhea" id="RHEA-COMP:10087"/>
        <dbReference type="ChEBI" id="CHEBI:65314"/>
        <dbReference type="ChEBI" id="CHEBI:65315"/>
        <dbReference type="EC" id="5.4.99.12"/>
    </reaction>
</comment>
<comment type="subunit">
    <text evidence="1">Homodimer.</text>
</comment>
<comment type="similarity">
    <text evidence="1">Belongs to the tRNA pseudouridine synthase TruA family.</text>
</comment>